<protein>
    <recommendedName>
        <fullName evidence="1">Histidinol-phosphate aminotransferase 1</fullName>
        <ecNumber evidence="1">2.6.1.9</ecNumber>
    </recommendedName>
    <alternativeName>
        <fullName evidence="1">Imidazole acetol-phosphate transaminase 1</fullName>
    </alternativeName>
</protein>
<evidence type="ECO:0000255" key="1">
    <source>
        <dbReference type="HAMAP-Rule" id="MF_01023"/>
    </source>
</evidence>
<reference key="1">
    <citation type="journal article" date="2005" name="Nat. Biotechnol.">
        <title>Complete genome sequence of the plant commensal Pseudomonas fluorescens Pf-5.</title>
        <authorList>
            <person name="Paulsen I.T."/>
            <person name="Press C.M."/>
            <person name="Ravel J."/>
            <person name="Kobayashi D.Y."/>
            <person name="Myers G.S.A."/>
            <person name="Mavrodi D.V."/>
            <person name="DeBoy R.T."/>
            <person name="Seshadri R."/>
            <person name="Ren Q."/>
            <person name="Madupu R."/>
            <person name="Dodson R.J."/>
            <person name="Durkin A.S."/>
            <person name="Brinkac L.M."/>
            <person name="Daugherty S.C."/>
            <person name="Sullivan S.A."/>
            <person name="Rosovitz M.J."/>
            <person name="Gwinn M.L."/>
            <person name="Zhou L."/>
            <person name="Schneider D.J."/>
            <person name="Cartinhour S.W."/>
            <person name="Nelson W.C."/>
            <person name="Weidman J."/>
            <person name="Watkins K."/>
            <person name="Tran K."/>
            <person name="Khouri H."/>
            <person name="Pierson E.A."/>
            <person name="Pierson L.S. III"/>
            <person name="Thomashow L.S."/>
            <person name="Loper J.E."/>
        </authorList>
    </citation>
    <scope>NUCLEOTIDE SEQUENCE [LARGE SCALE GENOMIC DNA]</scope>
    <source>
        <strain>ATCC BAA-477 / NRRL B-23932 / Pf-5</strain>
    </source>
</reference>
<comment type="catalytic activity">
    <reaction evidence="1">
        <text>L-histidinol phosphate + 2-oxoglutarate = 3-(imidazol-4-yl)-2-oxopropyl phosphate + L-glutamate</text>
        <dbReference type="Rhea" id="RHEA:23744"/>
        <dbReference type="ChEBI" id="CHEBI:16810"/>
        <dbReference type="ChEBI" id="CHEBI:29985"/>
        <dbReference type="ChEBI" id="CHEBI:57766"/>
        <dbReference type="ChEBI" id="CHEBI:57980"/>
        <dbReference type="EC" id="2.6.1.9"/>
    </reaction>
</comment>
<comment type="cofactor">
    <cofactor evidence="1">
        <name>pyridoxal 5'-phosphate</name>
        <dbReference type="ChEBI" id="CHEBI:597326"/>
    </cofactor>
</comment>
<comment type="pathway">
    <text evidence="1">Amino-acid biosynthesis; L-histidine biosynthesis; L-histidine from 5-phospho-alpha-D-ribose 1-diphosphate: step 7/9.</text>
</comment>
<comment type="subunit">
    <text evidence="1">Homodimer.</text>
</comment>
<comment type="similarity">
    <text evidence="1">Belongs to the class-II pyridoxal-phosphate-dependent aminotransferase family. Histidinol-phosphate aminotransferase subfamily.</text>
</comment>
<name>HIS81_PSEF5</name>
<feature type="chain" id="PRO_0000153419" description="Histidinol-phosphate aminotransferase 1">
    <location>
        <begin position="1"/>
        <end position="350"/>
    </location>
</feature>
<feature type="modified residue" description="N6-(pyridoxal phosphate)lysine" evidence="1">
    <location>
        <position position="210"/>
    </location>
</feature>
<proteinExistence type="inferred from homology"/>
<keyword id="KW-0028">Amino-acid biosynthesis</keyword>
<keyword id="KW-0032">Aminotransferase</keyword>
<keyword id="KW-0368">Histidine biosynthesis</keyword>
<keyword id="KW-0663">Pyridoxal phosphate</keyword>
<keyword id="KW-0808">Transferase</keyword>
<gene>
    <name evidence="1" type="primary">hisC1</name>
    <name type="ordered locus">PFL_0930</name>
</gene>
<organism>
    <name type="scientific">Pseudomonas fluorescens (strain ATCC BAA-477 / NRRL B-23932 / Pf-5)</name>
    <dbReference type="NCBI Taxonomy" id="220664"/>
    <lineage>
        <taxon>Bacteria</taxon>
        <taxon>Pseudomonadati</taxon>
        <taxon>Pseudomonadota</taxon>
        <taxon>Gammaproteobacteria</taxon>
        <taxon>Pseudomonadales</taxon>
        <taxon>Pseudomonadaceae</taxon>
        <taxon>Pseudomonas</taxon>
    </lineage>
</organism>
<sequence length="350" mass="38647">MSKFWSPFVKNLVPYVPGEQPKLTKLVKLNTNENPYGPSPRALAAMQAELNDNLRLYPDPNSDLLKQAVASYYGVQGNQVFLGNGSDEVLAHIFHGLLQQEKPLLFPDISYSFYPVYCGLYGIEHEAVPLDEQFQIRVADYARPNGGIIFPNPNAPTGCLLALDAVEQILKASPDSVVVVDEAYIDFGGQTAISLVDRYPNLLVTQTLSKSRSLAGLRVGLAVGHPDLIEALERVKNSFNSYPLDRLAIVGAAAAFEDREYFAKTCQQVIDSREWVVAQLQAKGFEVLPSAANFIFARHPRHDAAGLAAKLREQGVIVRHFKQQRIAQFLRISIGTQEQNQALIDGLGEL</sequence>
<dbReference type="EC" id="2.6.1.9" evidence="1"/>
<dbReference type="EMBL" id="CP000076">
    <property type="protein sequence ID" value="AAY90217.1"/>
    <property type="molecule type" value="Genomic_DNA"/>
</dbReference>
<dbReference type="SMR" id="Q4KI72"/>
<dbReference type="STRING" id="220664.PFL_0930"/>
<dbReference type="KEGG" id="pfl:PFL_0930"/>
<dbReference type="PATRIC" id="fig|220664.5.peg.953"/>
<dbReference type="eggNOG" id="COG0079">
    <property type="taxonomic scope" value="Bacteria"/>
</dbReference>
<dbReference type="HOGENOM" id="CLU_017584_3_0_6"/>
<dbReference type="UniPathway" id="UPA00031">
    <property type="reaction ID" value="UER00012"/>
</dbReference>
<dbReference type="Proteomes" id="UP000008540">
    <property type="component" value="Chromosome"/>
</dbReference>
<dbReference type="GO" id="GO:0004400">
    <property type="term" value="F:histidinol-phosphate transaminase activity"/>
    <property type="evidence" value="ECO:0007669"/>
    <property type="project" value="UniProtKB-UniRule"/>
</dbReference>
<dbReference type="GO" id="GO:0030170">
    <property type="term" value="F:pyridoxal phosphate binding"/>
    <property type="evidence" value="ECO:0007669"/>
    <property type="project" value="InterPro"/>
</dbReference>
<dbReference type="GO" id="GO:0000105">
    <property type="term" value="P:L-histidine biosynthetic process"/>
    <property type="evidence" value="ECO:0007669"/>
    <property type="project" value="UniProtKB-UniRule"/>
</dbReference>
<dbReference type="CDD" id="cd00609">
    <property type="entry name" value="AAT_like"/>
    <property type="match status" value="1"/>
</dbReference>
<dbReference type="Gene3D" id="3.90.1150.10">
    <property type="entry name" value="Aspartate Aminotransferase, domain 1"/>
    <property type="match status" value="1"/>
</dbReference>
<dbReference type="Gene3D" id="3.40.640.10">
    <property type="entry name" value="Type I PLP-dependent aspartate aminotransferase-like (Major domain)"/>
    <property type="match status" value="1"/>
</dbReference>
<dbReference type="HAMAP" id="MF_01023">
    <property type="entry name" value="HisC_aminotrans_2"/>
    <property type="match status" value="1"/>
</dbReference>
<dbReference type="InterPro" id="IPR001917">
    <property type="entry name" value="Aminotrans_II_pyridoxalP_BS"/>
</dbReference>
<dbReference type="InterPro" id="IPR004839">
    <property type="entry name" value="Aminotransferase_I/II_large"/>
</dbReference>
<dbReference type="InterPro" id="IPR005861">
    <property type="entry name" value="HisP_aminotrans"/>
</dbReference>
<dbReference type="InterPro" id="IPR050106">
    <property type="entry name" value="HistidinolP_aminotransfase"/>
</dbReference>
<dbReference type="InterPro" id="IPR015424">
    <property type="entry name" value="PyrdxlP-dep_Trfase"/>
</dbReference>
<dbReference type="InterPro" id="IPR015421">
    <property type="entry name" value="PyrdxlP-dep_Trfase_major"/>
</dbReference>
<dbReference type="InterPro" id="IPR015422">
    <property type="entry name" value="PyrdxlP-dep_Trfase_small"/>
</dbReference>
<dbReference type="NCBIfam" id="TIGR01141">
    <property type="entry name" value="hisC"/>
    <property type="match status" value="1"/>
</dbReference>
<dbReference type="PANTHER" id="PTHR43643:SF3">
    <property type="entry name" value="HISTIDINOL-PHOSPHATE AMINOTRANSFERASE"/>
    <property type="match status" value="1"/>
</dbReference>
<dbReference type="PANTHER" id="PTHR43643">
    <property type="entry name" value="HISTIDINOL-PHOSPHATE AMINOTRANSFERASE 2"/>
    <property type="match status" value="1"/>
</dbReference>
<dbReference type="Pfam" id="PF00155">
    <property type="entry name" value="Aminotran_1_2"/>
    <property type="match status" value="1"/>
</dbReference>
<dbReference type="SUPFAM" id="SSF53383">
    <property type="entry name" value="PLP-dependent transferases"/>
    <property type="match status" value="1"/>
</dbReference>
<dbReference type="PROSITE" id="PS00599">
    <property type="entry name" value="AA_TRANSFER_CLASS_2"/>
    <property type="match status" value="1"/>
</dbReference>
<accession>Q4KI72</accession>